<accession>Q578U0</accession>
<gene>
    <name evidence="1" type="primary">fluC4</name>
    <name evidence="1" type="synonym">crcB4</name>
    <name type="ordered locus">BruAb2_0415</name>
</gene>
<organism>
    <name type="scientific">Brucella abortus biovar 1 (strain 9-941)</name>
    <dbReference type="NCBI Taxonomy" id="262698"/>
    <lineage>
        <taxon>Bacteria</taxon>
        <taxon>Pseudomonadati</taxon>
        <taxon>Pseudomonadota</taxon>
        <taxon>Alphaproteobacteria</taxon>
        <taxon>Hyphomicrobiales</taxon>
        <taxon>Brucellaceae</taxon>
        <taxon>Brucella/Ochrobactrum group</taxon>
        <taxon>Brucella</taxon>
    </lineage>
</organism>
<keyword id="KW-0997">Cell inner membrane</keyword>
<keyword id="KW-1003">Cell membrane</keyword>
<keyword id="KW-0407">Ion channel</keyword>
<keyword id="KW-0406">Ion transport</keyword>
<keyword id="KW-0472">Membrane</keyword>
<keyword id="KW-0479">Metal-binding</keyword>
<keyword id="KW-0915">Sodium</keyword>
<keyword id="KW-0812">Transmembrane</keyword>
<keyword id="KW-1133">Transmembrane helix</keyword>
<keyword id="KW-0813">Transport</keyword>
<dbReference type="EMBL" id="AE017224">
    <property type="protein sequence ID" value="AAX75844.1"/>
    <property type="molecule type" value="Genomic_DNA"/>
</dbReference>
<dbReference type="SMR" id="Q578U0"/>
<dbReference type="EnsemblBacteria" id="AAX75844">
    <property type="protein sequence ID" value="AAX75844"/>
    <property type="gene ID" value="BruAb2_0415"/>
</dbReference>
<dbReference type="KEGG" id="bmb:BruAb2_0415"/>
<dbReference type="HOGENOM" id="CLU_114342_3_0_5"/>
<dbReference type="Proteomes" id="UP000000540">
    <property type="component" value="Chromosome II"/>
</dbReference>
<dbReference type="GO" id="GO:0005886">
    <property type="term" value="C:plasma membrane"/>
    <property type="evidence" value="ECO:0007669"/>
    <property type="project" value="UniProtKB-SubCell"/>
</dbReference>
<dbReference type="GO" id="GO:0062054">
    <property type="term" value="F:fluoride channel activity"/>
    <property type="evidence" value="ECO:0007669"/>
    <property type="project" value="UniProtKB-UniRule"/>
</dbReference>
<dbReference type="GO" id="GO:0046872">
    <property type="term" value="F:metal ion binding"/>
    <property type="evidence" value="ECO:0007669"/>
    <property type="project" value="UniProtKB-KW"/>
</dbReference>
<dbReference type="GO" id="GO:0140114">
    <property type="term" value="P:cellular detoxification of fluoride"/>
    <property type="evidence" value="ECO:0007669"/>
    <property type="project" value="UniProtKB-UniRule"/>
</dbReference>
<dbReference type="HAMAP" id="MF_00454">
    <property type="entry name" value="FluC"/>
    <property type="match status" value="1"/>
</dbReference>
<dbReference type="InterPro" id="IPR003691">
    <property type="entry name" value="FluC"/>
</dbReference>
<dbReference type="NCBIfam" id="NF010829">
    <property type="entry name" value="PRK14233.1"/>
    <property type="match status" value="1"/>
</dbReference>
<dbReference type="PANTHER" id="PTHR28259">
    <property type="entry name" value="FLUORIDE EXPORT PROTEIN 1-RELATED"/>
    <property type="match status" value="1"/>
</dbReference>
<dbReference type="PANTHER" id="PTHR28259:SF1">
    <property type="entry name" value="FLUORIDE EXPORT PROTEIN 1-RELATED"/>
    <property type="match status" value="1"/>
</dbReference>
<dbReference type="Pfam" id="PF02537">
    <property type="entry name" value="CRCB"/>
    <property type="match status" value="1"/>
</dbReference>
<evidence type="ECO:0000255" key="1">
    <source>
        <dbReference type="HAMAP-Rule" id="MF_00454"/>
    </source>
</evidence>
<feature type="chain" id="PRO_0000110070" description="Fluoride-specific ion channel FluC 4">
    <location>
        <begin position="1"/>
        <end position="133"/>
    </location>
</feature>
<feature type="transmembrane region" description="Helical" evidence="1">
    <location>
        <begin position="7"/>
        <end position="27"/>
    </location>
</feature>
<feature type="transmembrane region" description="Helical" evidence="1">
    <location>
        <begin position="37"/>
        <end position="57"/>
    </location>
</feature>
<feature type="transmembrane region" description="Helical" evidence="1">
    <location>
        <begin position="60"/>
        <end position="80"/>
    </location>
</feature>
<feature type="transmembrane region" description="Helical" evidence="1">
    <location>
        <begin position="107"/>
        <end position="127"/>
    </location>
</feature>
<feature type="binding site" evidence="1">
    <location>
        <position position="79"/>
    </location>
    <ligand>
        <name>Na(+)</name>
        <dbReference type="ChEBI" id="CHEBI:29101"/>
        <note>structural</note>
    </ligand>
</feature>
<feature type="binding site" evidence="1">
    <location>
        <position position="82"/>
    </location>
    <ligand>
        <name>Na(+)</name>
        <dbReference type="ChEBI" id="CHEBI:29101"/>
        <note>structural</note>
    </ligand>
</feature>
<reference key="1">
    <citation type="journal article" date="2005" name="J. Bacteriol.">
        <title>Completion of the genome sequence of Brucella abortus and comparison to the highly similar genomes of Brucella melitensis and Brucella suis.</title>
        <authorList>
            <person name="Halling S.M."/>
            <person name="Peterson-Burch B.D."/>
            <person name="Bricker B.J."/>
            <person name="Zuerner R.L."/>
            <person name="Qing Z."/>
            <person name="Li L.-L."/>
            <person name="Kapur V."/>
            <person name="Alt D.P."/>
            <person name="Olsen S.C."/>
        </authorList>
    </citation>
    <scope>NUCLEOTIDE SEQUENCE [LARGE SCALE GENOMIC DNA]</scope>
    <source>
        <strain>9-941</strain>
    </source>
</reference>
<name>FLUC4_BRUAB</name>
<sequence>MSVEASILVLVGGFIGGVMRFFLSGYVGRRIGETFPWGTFVVNVSGAFVIGTAAGLGARLGGIFSTTIFHEFIMVGLLGGYTTVSSFCLQSVNLMLDGEQRQALFNIVASALLCVLAVAAGYGGIMWIMEWPG</sequence>
<protein>
    <recommendedName>
        <fullName evidence="1">Fluoride-specific ion channel FluC 4</fullName>
    </recommendedName>
</protein>
<comment type="function">
    <text evidence="1">Fluoride-specific ion channel. Important for reducing fluoride concentration in the cell, thus reducing its toxicity.</text>
</comment>
<comment type="catalytic activity">
    <reaction evidence="1">
        <text>fluoride(in) = fluoride(out)</text>
        <dbReference type="Rhea" id="RHEA:76159"/>
        <dbReference type="ChEBI" id="CHEBI:17051"/>
    </reaction>
    <physiologicalReaction direction="left-to-right" evidence="1">
        <dbReference type="Rhea" id="RHEA:76160"/>
    </physiologicalReaction>
</comment>
<comment type="activity regulation">
    <text evidence="1">Na(+) is not transported, but it plays an essential structural role and its presence is essential for fluoride channel function.</text>
</comment>
<comment type="subcellular location">
    <subcellularLocation>
        <location evidence="1">Cell inner membrane</location>
        <topology evidence="1">Multi-pass membrane protein</topology>
    </subcellularLocation>
</comment>
<comment type="similarity">
    <text evidence="1">Belongs to the fluoride channel Fluc/FEX (TC 1.A.43) family.</text>
</comment>
<proteinExistence type="inferred from homology"/>